<keyword id="KW-0488">Methylation</keyword>
<keyword id="KW-0687">Ribonucleoprotein</keyword>
<keyword id="KW-0689">Ribosomal protein</keyword>
<keyword id="KW-0694">RNA-binding</keyword>
<keyword id="KW-0699">rRNA-binding</keyword>
<sequence length="141" mass="14988">MAKKVIKVVKLQIPAGKANPAPPVGPALGQAGVNIMAFCKEFNARTADQAGLIIPVEITVFEDRSFTFITKTPPAAVLLKKAAGIESGSGEPNRNKVATIKRDKVREIAEMKMPDLNAASIEAAMRMVEGTARSMGIVIED</sequence>
<reference key="1">
    <citation type="submission" date="2009-06" db="EMBL/GenBank/DDBJ databases">
        <title>Complete sequence of chromosome of Geopacillus sp. WCH70.</title>
        <authorList>
            <consortium name="US DOE Joint Genome Institute"/>
            <person name="Lucas S."/>
            <person name="Copeland A."/>
            <person name="Lapidus A."/>
            <person name="Glavina del Rio T."/>
            <person name="Dalin E."/>
            <person name="Tice H."/>
            <person name="Bruce D."/>
            <person name="Goodwin L."/>
            <person name="Pitluck S."/>
            <person name="Chertkov O."/>
            <person name="Brettin T."/>
            <person name="Detter J.C."/>
            <person name="Han C."/>
            <person name="Larimer F."/>
            <person name="Land M."/>
            <person name="Hauser L."/>
            <person name="Kyrpides N."/>
            <person name="Mikhailova N."/>
            <person name="Brumm P."/>
            <person name="Mead D.A."/>
            <person name="Richardson P."/>
        </authorList>
    </citation>
    <scope>NUCLEOTIDE SEQUENCE [LARGE SCALE GENOMIC DNA]</scope>
    <source>
        <strain>WCH70</strain>
    </source>
</reference>
<organism>
    <name type="scientific">Geobacillus sp. (strain WCH70)</name>
    <dbReference type="NCBI Taxonomy" id="471223"/>
    <lineage>
        <taxon>Bacteria</taxon>
        <taxon>Bacillati</taxon>
        <taxon>Bacillota</taxon>
        <taxon>Bacilli</taxon>
        <taxon>Bacillales</taxon>
        <taxon>Anoxybacillaceae</taxon>
        <taxon>Geobacillus</taxon>
    </lineage>
</organism>
<name>RL11_GEOSW</name>
<comment type="function">
    <text evidence="1">Forms part of the ribosomal stalk which helps the ribosome interact with GTP-bound translation factors.</text>
</comment>
<comment type="subunit">
    <text evidence="1">Part of the ribosomal stalk of the 50S ribosomal subunit. Interacts with L10 and the large rRNA to form the base of the stalk. L10 forms an elongated spine to which L12 dimers bind in a sequential fashion forming a multimeric L10(L12)X complex.</text>
</comment>
<comment type="PTM">
    <text evidence="1">One or more lysine residues are methylated.</text>
</comment>
<comment type="similarity">
    <text evidence="1">Belongs to the universal ribosomal protein uL11 family.</text>
</comment>
<accession>C5D3Q4</accession>
<evidence type="ECO:0000255" key="1">
    <source>
        <dbReference type="HAMAP-Rule" id="MF_00736"/>
    </source>
</evidence>
<evidence type="ECO:0000305" key="2"/>
<protein>
    <recommendedName>
        <fullName evidence="1">Large ribosomal subunit protein uL11</fullName>
    </recommendedName>
    <alternativeName>
        <fullName evidence="2">50S ribosomal protein L11</fullName>
    </alternativeName>
</protein>
<dbReference type="EMBL" id="CP001638">
    <property type="protein sequence ID" value="ACS23038.1"/>
    <property type="molecule type" value="Genomic_DNA"/>
</dbReference>
<dbReference type="SMR" id="C5D3Q4"/>
<dbReference type="STRING" id="471223.GWCH70_0098"/>
<dbReference type="KEGG" id="gwc:GWCH70_0098"/>
<dbReference type="eggNOG" id="COG0080">
    <property type="taxonomic scope" value="Bacteria"/>
</dbReference>
<dbReference type="HOGENOM" id="CLU_074237_2_1_9"/>
<dbReference type="OrthoDB" id="9802408at2"/>
<dbReference type="GO" id="GO:0022625">
    <property type="term" value="C:cytosolic large ribosomal subunit"/>
    <property type="evidence" value="ECO:0007669"/>
    <property type="project" value="TreeGrafter"/>
</dbReference>
<dbReference type="GO" id="GO:0070180">
    <property type="term" value="F:large ribosomal subunit rRNA binding"/>
    <property type="evidence" value="ECO:0007669"/>
    <property type="project" value="UniProtKB-UniRule"/>
</dbReference>
<dbReference type="GO" id="GO:0003735">
    <property type="term" value="F:structural constituent of ribosome"/>
    <property type="evidence" value="ECO:0007669"/>
    <property type="project" value="InterPro"/>
</dbReference>
<dbReference type="GO" id="GO:0006412">
    <property type="term" value="P:translation"/>
    <property type="evidence" value="ECO:0007669"/>
    <property type="project" value="UniProtKB-UniRule"/>
</dbReference>
<dbReference type="CDD" id="cd00349">
    <property type="entry name" value="Ribosomal_L11"/>
    <property type="match status" value="1"/>
</dbReference>
<dbReference type="FunFam" id="1.10.10.250:FF:000001">
    <property type="entry name" value="50S ribosomal protein L11"/>
    <property type="match status" value="1"/>
</dbReference>
<dbReference type="FunFam" id="3.30.1550.10:FF:000001">
    <property type="entry name" value="50S ribosomal protein L11"/>
    <property type="match status" value="1"/>
</dbReference>
<dbReference type="Gene3D" id="1.10.10.250">
    <property type="entry name" value="Ribosomal protein L11, C-terminal domain"/>
    <property type="match status" value="1"/>
</dbReference>
<dbReference type="Gene3D" id="3.30.1550.10">
    <property type="entry name" value="Ribosomal protein L11/L12, N-terminal domain"/>
    <property type="match status" value="1"/>
</dbReference>
<dbReference type="HAMAP" id="MF_00736">
    <property type="entry name" value="Ribosomal_uL11"/>
    <property type="match status" value="1"/>
</dbReference>
<dbReference type="InterPro" id="IPR000911">
    <property type="entry name" value="Ribosomal_uL11"/>
</dbReference>
<dbReference type="InterPro" id="IPR006519">
    <property type="entry name" value="Ribosomal_uL11_bac-typ"/>
</dbReference>
<dbReference type="InterPro" id="IPR020783">
    <property type="entry name" value="Ribosomal_uL11_C"/>
</dbReference>
<dbReference type="InterPro" id="IPR036769">
    <property type="entry name" value="Ribosomal_uL11_C_sf"/>
</dbReference>
<dbReference type="InterPro" id="IPR020785">
    <property type="entry name" value="Ribosomal_uL11_CS"/>
</dbReference>
<dbReference type="InterPro" id="IPR020784">
    <property type="entry name" value="Ribosomal_uL11_N"/>
</dbReference>
<dbReference type="InterPro" id="IPR036796">
    <property type="entry name" value="Ribosomal_uL11_N_sf"/>
</dbReference>
<dbReference type="NCBIfam" id="TIGR01632">
    <property type="entry name" value="L11_bact"/>
    <property type="match status" value="1"/>
</dbReference>
<dbReference type="PANTHER" id="PTHR11661">
    <property type="entry name" value="60S RIBOSOMAL PROTEIN L12"/>
    <property type="match status" value="1"/>
</dbReference>
<dbReference type="PANTHER" id="PTHR11661:SF1">
    <property type="entry name" value="LARGE RIBOSOMAL SUBUNIT PROTEIN UL11M"/>
    <property type="match status" value="1"/>
</dbReference>
<dbReference type="Pfam" id="PF00298">
    <property type="entry name" value="Ribosomal_L11"/>
    <property type="match status" value="1"/>
</dbReference>
<dbReference type="Pfam" id="PF03946">
    <property type="entry name" value="Ribosomal_L11_N"/>
    <property type="match status" value="1"/>
</dbReference>
<dbReference type="SMART" id="SM00649">
    <property type="entry name" value="RL11"/>
    <property type="match status" value="1"/>
</dbReference>
<dbReference type="SUPFAM" id="SSF54747">
    <property type="entry name" value="Ribosomal L11/L12e N-terminal domain"/>
    <property type="match status" value="1"/>
</dbReference>
<dbReference type="SUPFAM" id="SSF46906">
    <property type="entry name" value="Ribosomal protein L11, C-terminal domain"/>
    <property type="match status" value="1"/>
</dbReference>
<dbReference type="PROSITE" id="PS00359">
    <property type="entry name" value="RIBOSOMAL_L11"/>
    <property type="match status" value="1"/>
</dbReference>
<feature type="chain" id="PRO_1000212777" description="Large ribosomal subunit protein uL11">
    <location>
        <begin position="1"/>
        <end position="141"/>
    </location>
</feature>
<proteinExistence type="inferred from homology"/>
<gene>
    <name evidence="1" type="primary">rplK</name>
    <name type="ordered locus">GWCH70_0098</name>
</gene>